<protein>
    <recommendedName>
        <fullName>G-protein coupled receptor</fullName>
    </recommendedName>
</protein>
<comment type="subcellular location">
    <subcellularLocation>
        <location evidence="4">Host membrane</location>
        <topology evidence="4">Multi-pass membrane protein</topology>
    </subcellularLocation>
</comment>
<comment type="similarity">
    <text evidence="2">Belongs to the G-protein coupled receptor 1 family.</text>
</comment>
<name>VGCR_ELHVK</name>
<feature type="chain" id="PRO_0000408176" description="G-protein coupled receptor">
    <location>
        <begin position="1"/>
        <end position="380"/>
    </location>
</feature>
<feature type="transmembrane region" description="Helical" evidence="1">
    <location>
        <begin position="26"/>
        <end position="46"/>
    </location>
</feature>
<feature type="transmembrane region" description="Helical" evidence="1">
    <location>
        <begin position="60"/>
        <end position="80"/>
    </location>
</feature>
<feature type="transmembrane region" description="Helical" evidence="1">
    <location>
        <begin position="97"/>
        <end position="117"/>
    </location>
</feature>
<feature type="transmembrane region" description="Helical" evidence="1">
    <location>
        <begin position="145"/>
        <end position="165"/>
    </location>
</feature>
<feature type="transmembrane region" description="Helical" evidence="1">
    <location>
        <begin position="184"/>
        <end position="204"/>
    </location>
</feature>
<feature type="transmembrane region" description="Helical" evidence="1">
    <location>
        <begin position="220"/>
        <end position="240"/>
    </location>
</feature>
<feature type="transmembrane region" description="Helical" evidence="1">
    <location>
        <begin position="275"/>
        <end position="295"/>
    </location>
</feature>
<feature type="region of interest" description="Disordered" evidence="3">
    <location>
        <begin position="328"/>
        <end position="380"/>
    </location>
</feature>
<feature type="disulfide bond" evidence="2">
    <location>
        <begin position="95"/>
        <end position="170"/>
    </location>
</feature>
<sequence length="380" mass="42923">MDVLNLFNETIKVGAFNATQLVEAYVISIFSLTTFVGLAITLYLGIAYLYKKPADQVVGLVCCDVLIVNAVCLITLPLWVYQAATKKWFGGEFMCKFAGMFYTMNVYMSVWSCVIVTFDRWYCMMCKNLQAVTVLGRTIRTNQVVTILTLLVTFIGLFSLTETSIVDKKCYLYSGDSLLSFVNAALGYTVPWLAIAIMIVHIILRTSRLDYDPKWLNTNILMWMMFTLLVTQGPYYSLSAYMGNFKSFVEKNMTHHSNKVTASYFHGDASHSIQVAMLVCTHALAITRMFSVPLILSTLAGYEPLYVWKRITRCCCMRVEYENLEDESQSKLLRGEENPNYDYSPKSVRIKPLKSPGGGDNSSLKDEGYDEESQNGFSIG</sequence>
<organismHost>
    <name type="scientific">Elephas maximus</name>
    <name type="common">Indian elephant</name>
    <dbReference type="NCBI Taxonomy" id="9783"/>
</organismHost>
<organismHost>
    <name type="scientific">Loxodonta africana</name>
    <name type="common">African elephant</name>
    <dbReference type="NCBI Taxonomy" id="9785"/>
</organismHost>
<organismHost>
    <name type="scientific">Loxodonta cyclotis</name>
    <name type="common">African forest elephant</name>
    <dbReference type="NCBI Taxonomy" id="99490"/>
</organismHost>
<accession>Q18LE5</accession>
<organism>
    <name type="scientific">Elephantid herpesvirus 1 (isolate Asian elephant/Berlin/Kiba/1998)</name>
    <name type="common">EIHV-1</name>
    <name type="synonym">Elephant endotheliotropic herpesvirus</name>
    <dbReference type="NCBI Taxonomy" id="654902"/>
    <lineage>
        <taxon>Viruses</taxon>
        <taxon>Duplodnaviria</taxon>
        <taxon>Heunggongvirae</taxon>
        <taxon>Peploviricota</taxon>
        <taxon>Herviviricetes</taxon>
        <taxon>Herpesvirales</taxon>
        <taxon>Orthoherpesviridae</taxon>
        <taxon>Betaherpesvirinae</taxon>
        <taxon>Proboscivirus</taxon>
        <taxon>Proboscivirus elephantidbeta1</taxon>
        <taxon>Elephantid herpesvirus 1</taxon>
    </lineage>
</organism>
<dbReference type="EMBL" id="AF322977">
    <property type="protein sequence ID" value="ABG36574.1"/>
    <property type="molecule type" value="Genomic_DNA"/>
</dbReference>
<dbReference type="GO" id="GO:0033644">
    <property type="term" value="C:host cell membrane"/>
    <property type="evidence" value="ECO:0007669"/>
    <property type="project" value="UniProtKB-SubCell"/>
</dbReference>
<dbReference type="GO" id="GO:0016020">
    <property type="term" value="C:membrane"/>
    <property type="evidence" value="ECO:0007669"/>
    <property type="project" value="UniProtKB-KW"/>
</dbReference>
<dbReference type="GO" id="GO:0004930">
    <property type="term" value="F:G protein-coupled receptor activity"/>
    <property type="evidence" value="ECO:0007669"/>
    <property type="project" value="UniProtKB-KW"/>
</dbReference>
<dbReference type="CDD" id="cd00637">
    <property type="entry name" value="7tm_classA_rhodopsin-like"/>
    <property type="match status" value="1"/>
</dbReference>
<dbReference type="Gene3D" id="1.20.1070.10">
    <property type="entry name" value="Rhodopsin 7-helix transmembrane proteins"/>
    <property type="match status" value="1"/>
</dbReference>
<dbReference type="InterPro" id="IPR050119">
    <property type="entry name" value="CCR1-9-like"/>
</dbReference>
<dbReference type="InterPro" id="IPR000276">
    <property type="entry name" value="GPCR_Rhodpsn"/>
</dbReference>
<dbReference type="InterPro" id="IPR017452">
    <property type="entry name" value="GPCR_Rhodpsn_7TM"/>
</dbReference>
<dbReference type="PANTHER" id="PTHR10489">
    <property type="entry name" value="CELL ADHESION MOLECULE"/>
    <property type="match status" value="1"/>
</dbReference>
<dbReference type="PANTHER" id="PTHR10489:SF932">
    <property type="entry name" value="G-PROTEIN COUPLED RECEPTORS FAMILY 1 PROFILE DOMAIN-CONTAINING PROTEIN"/>
    <property type="match status" value="1"/>
</dbReference>
<dbReference type="Pfam" id="PF00001">
    <property type="entry name" value="7tm_1"/>
    <property type="match status" value="1"/>
</dbReference>
<dbReference type="SUPFAM" id="SSF81321">
    <property type="entry name" value="Family A G protein-coupled receptor-like"/>
    <property type="match status" value="1"/>
</dbReference>
<dbReference type="PROSITE" id="PS50262">
    <property type="entry name" value="G_PROTEIN_RECEP_F1_2"/>
    <property type="match status" value="1"/>
</dbReference>
<evidence type="ECO:0000255" key="1"/>
<evidence type="ECO:0000255" key="2">
    <source>
        <dbReference type="PROSITE-ProRule" id="PRU00521"/>
    </source>
</evidence>
<evidence type="ECO:0000256" key="3">
    <source>
        <dbReference type="SAM" id="MobiDB-lite"/>
    </source>
</evidence>
<evidence type="ECO:0000305" key="4"/>
<keyword id="KW-1015">Disulfide bond</keyword>
<keyword id="KW-0297">G-protein coupled receptor</keyword>
<keyword id="KW-1043">Host membrane</keyword>
<keyword id="KW-0472">Membrane</keyword>
<keyword id="KW-0675">Receptor</keyword>
<keyword id="KW-0807">Transducer</keyword>
<keyword id="KW-0812">Transmembrane</keyword>
<keyword id="KW-1133">Transmembrane helix</keyword>
<proteinExistence type="inferred from homology"/>
<reference key="1">
    <citation type="journal article" date="2007" name="J. Virol.">
        <title>Identification of novel rodent herpesviruses, including the first gammaherpesvirus of Mus musculus.</title>
        <authorList>
            <person name="Ehlers B."/>
            <person name="Kuchler J."/>
            <person name="Yasmum N."/>
            <person name="Dural G."/>
            <person name="Voigt S."/>
            <person name="Schmidt-Chanasit J."/>
            <person name="Jakel T."/>
            <person name="Matuschka F.R."/>
            <person name="Richter D."/>
            <person name="Essbauer S."/>
            <person name="Hughes D.J."/>
            <person name="Summers C."/>
            <person name="Bennett M."/>
            <person name="Stewart J.P."/>
            <person name="Ulrich R.G."/>
        </authorList>
    </citation>
    <scope>NUCLEOTIDE SEQUENCE [GENOMIC DNA]</scope>
</reference>
<reference key="2">
    <citation type="journal article" date="2001" name="J. Gen. Virol.">
        <title>Genetic and ultrastructural characterization of a European isolate of the fatal endotheliotropic elephant herpesvirus.</title>
        <authorList>
            <person name="Ehlers B."/>
            <person name="Burkhardt S."/>
            <person name="Goltz M."/>
            <person name="Bergmann V."/>
            <person name="Ochs A."/>
            <person name="Weiler H."/>
            <person name="Hentschke J."/>
        </authorList>
    </citation>
    <scope>NUCLEOTIDE SEQUENCE [GENOMIC DNA]</scope>
</reference>